<name>NUSB_OCEIH</name>
<feature type="chain" id="PRO_0000176561" description="Transcription antitermination protein NusB">
    <location>
        <begin position="1"/>
        <end position="126"/>
    </location>
</feature>
<gene>
    <name evidence="1" type="primary">nusB</name>
    <name type="ordered locus">OB1881</name>
</gene>
<dbReference type="EMBL" id="BA000028">
    <property type="protein sequence ID" value="BAC13837.1"/>
    <property type="molecule type" value="Genomic_DNA"/>
</dbReference>
<dbReference type="RefSeq" id="WP_011066278.1">
    <property type="nucleotide sequence ID" value="NC_004193.1"/>
</dbReference>
<dbReference type="SMR" id="Q8EQ42"/>
<dbReference type="STRING" id="221109.gene:10734121"/>
<dbReference type="KEGG" id="oih:OB1881"/>
<dbReference type="eggNOG" id="COG0781">
    <property type="taxonomic scope" value="Bacteria"/>
</dbReference>
<dbReference type="HOGENOM" id="CLU_087843_3_3_9"/>
<dbReference type="OrthoDB" id="9811381at2"/>
<dbReference type="PhylomeDB" id="Q8EQ42"/>
<dbReference type="Proteomes" id="UP000000822">
    <property type="component" value="Chromosome"/>
</dbReference>
<dbReference type="GO" id="GO:0005829">
    <property type="term" value="C:cytosol"/>
    <property type="evidence" value="ECO:0007669"/>
    <property type="project" value="TreeGrafter"/>
</dbReference>
<dbReference type="GO" id="GO:0003723">
    <property type="term" value="F:RNA binding"/>
    <property type="evidence" value="ECO:0007669"/>
    <property type="project" value="UniProtKB-UniRule"/>
</dbReference>
<dbReference type="GO" id="GO:0006353">
    <property type="term" value="P:DNA-templated transcription termination"/>
    <property type="evidence" value="ECO:0007669"/>
    <property type="project" value="UniProtKB-UniRule"/>
</dbReference>
<dbReference type="GO" id="GO:0031564">
    <property type="term" value="P:transcription antitermination"/>
    <property type="evidence" value="ECO:0007669"/>
    <property type="project" value="UniProtKB-KW"/>
</dbReference>
<dbReference type="Gene3D" id="1.10.940.10">
    <property type="entry name" value="NusB-like"/>
    <property type="match status" value="1"/>
</dbReference>
<dbReference type="HAMAP" id="MF_00073">
    <property type="entry name" value="NusB"/>
    <property type="match status" value="1"/>
</dbReference>
<dbReference type="InterPro" id="IPR035926">
    <property type="entry name" value="NusB-like_sf"/>
</dbReference>
<dbReference type="InterPro" id="IPR011605">
    <property type="entry name" value="NusB_fam"/>
</dbReference>
<dbReference type="InterPro" id="IPR006027">
    <property type="entry name" value="NusB_RsmB_TIM44"/>
</dbReference>
<dbReference type="NCBIfam" id="TIGR01951">
    <property type="entry name" value="nusB"/>
    <property type="match status" value="1"/>
</dbReference>
<dbReference type="NCBIfam" id="NF001223">
    <property type="entry name" value="PRK00202.1-1"/>
    <property type="match status" value="1"/>
</dbReference>
<dbReference type="PANTHER" id="PTHR11078:SF3">
    <property type="entry name" value="ANTITERMINATION NUSB DOMAIN-CONTAINING PROTEIN"/>
    <property type="match status" value="1"/>
</dbReference>
<dbReference type="PANTHER" id="PTHR11078">
    <property type="entry name" value="N UTILIZATION SUBSTANCE PROTEIN B-RELATED"/>
    <property type="match status" value="1"/>
</dbReference>
<dbReference type="Pfam" id="PF01029">
    <property type="entry name" value="NusB"/>
    <property type="match status" value="1"/>
</dbReference>
<dbReference type="SUPFAM" id="SSF48013">
    <property type="entry name" value="NusB-like"/>
    <property type="match status" value="1"/>
</dbReference>
<accession>Q8EQ42</accession>
<protein>
    <recommendedName>
        <fullName evidence="1">Transcription antitermination protein NusB</fullName>
    </recommendedName>
    <alternativeName>
        <fullName evidence="1">Antitermination factor NusB</fullName>
    </alternativeName>
</protein>
<comment type="function">
    <text evidence="1">Involved in transcription antitermination. Required for transcription of ribosomal RNA (rRNA) genes. Binds specifically to the boxA antiterminator sequence of the ribosomal RNA (rrn) operons.</text>
</comment>
<comment type="similarity">
    <text evidence="1">Belongs to the NusB family.</text>
</comment>
<proteinExistence type="inferred from homology"/>
<keyword id="KW-1185">Reference proteome</keyword>
<keyword id="KW-0694">RNA-binding</keyword>
<keyword id="KW-0804">Transcription</keyword>
<keyword id="KW-0889">Transcription antitermination</keyword>
<keyword id="KW-0805">Transcription regulation</keyword>
<reference key="1">
    <citation type="journal article" date="2002" name="Nucleic Acids Res.">
        <title>Genome sequence of Oceanobacillus iheyensis isolated from the Iheya Ridge and its unexpected adaptive capabilities to extreme environments.</title>
        <authorList>
            <person name="Takami H."/>
            <person name="Takaki Y."/>
            <person name="Uchiyama I."/>
        </authorList>
    </citation>
    <scope>NUCLEOTIDE SEQUENCE [LARGE SCALE GENOMIC DNA]</scope>
    <source>
        <strain>DSM 14371 / CIP 107618 / JCM 11309 / KCTC 3954 / HTE831</strain>
    </source>
</reference>
<organism>
    <name type="scientific">Oceanobacillus iheyensis (strain DSM 14371 / CIP 107618 / JCM 11309 / KCTC 3954 / HTE831)</name>
    <dbReference type="NCBI Taxonomy" id="221109"/>
    <lineage>
        <taxon>Bacteria</taxon>
        <taxon>Bacillati</taxon>
        <taxon>Bacillota</taxon>
        <taxon>Bacilli</taxon>
        <taxon>Bacillales</taxon>
        <taxon>Bacillaceae</taxon>
        <taxon>Oceanobacillus</taxon>
    </lineage>
</organism>
<evidence type="ECO:0000255" key="1">
    <source>
        <dbReference type="HAMAP-Rule" id="MF_00073"/>
    </source>
</evidence>
<sequence length="126" mass="14642">MNRHKAREKAFQVLFQLDINETELEEVMETLKEKERYDVFLRSLVEGVIQHKSVIDEKISTHLEKWTIDRIASVERTILRMAILEIMYIDDIPQNVSINEAIELAHTFGDEQSGKFVNGVLSKIIA</sequence>